<proteinExistence type="inferred from homology"/>
<keyword id="KW-1003">Cell membrane</keyword>
<keyword id="KW-0961">Cell wall biogenesis/degradation</keyword>
<keyword id="KW-0328">Glycosyltransferase</keyword>
<keyword id="KW-0472">Membrane</keyword>
<keyword id="KW-0496">Mitochondrion</keyword>
<keyword id="KW-1185">Reference proteome</keyword>
<keyword id="KW-0808">Transferase</keyword>
<keyword id="KW-0812">Transmembrane</keyword>
<keyword id="KW-1133">Transmembrane helix</keyword>
<name>FKS1_ASPNC</name>
<evidence type="ECO:0000250" key="1">
    <source>
        <dbReference type="UniProtKB" id="P38631"/>
    </source>
</evidence>
<evidence type="ECO:0000250" key="2">
    <source>
        <dbReference type="UniProtKB" id="Q04952"/>
    </source>
</evidence>
<evidence type="ECO:0000255" key="3"/>
<evidence type="ECO:0000256" key="4">
    <source>
        <dbReference type="SAM" id="MobiDB-lite"/>
    </source>
</evidence>
<evidence type="ECO:0000303" key="5">
    <source>
    </source>
</evidence>
<evidence type="ECO:0000305" key="6"/>
<evidence type="ECO:0000312" key="7">
    <source>
        <dbReference type="EMBL" id="AAS37661.1"/>
    </source>
</evidence>
<evidence type="ECO:0000312" key="8">
    <source>
        <dbReference type="EMBL" id="CAK47999.1"/>
    </source>
</evidence>
<dbReference type="EC" id="2.4.1.34" evidence="1"/>
<dbReference type="EMBL" id="AM270115">
    <property type="protein sequence ID" value="CAK47999.1"/>
    <property type="molecule type" value="Genomic_DNA"/>
</dbReference>
<dbReference type="EMBL" id="AY533027">
    <property type="protein sequence ID" value="AAS37661.1"/>
    <property type="molecule type" value="Genomic_DNA"/>
</dbReference>
<dbReference type="RefSeq" id="XP_001390977.1">
    <property type="nucleotide sequence ID" value="XM_001390940.2"/>
</dbReference>
<dbReference type="SMR" id="A2QLK4"/>
<dbReference type="DrugBank" id="DB00362">
    <property type="generic name" value="Anidulafungin"/>
</dbReference>
<dbReference type="DrugBank" id="DB00520">
    <property type="generic name" value="Caspofungin"/>
</dbReference>
<dbReference type="DrugBank" id="DB01141">
    <property type="generic name" value="Micafungin"/>
</dbReference>
<dbReference type="DrugBank" id="DB16310">
    <property type="generic name" value="Rezafungin"/>
</dbReference>
<dbReference type="CAZy" id="GT48">
    <property type="family name" value="Glycosyltransferase Family 48"/>
</dbReference>
<dbReference type="EnsemblFungi" id="CAK47999">
    <property type="protein sequence ID" value="CAK47999"/>
    <property type="gene ID" value="An06g01550"/>
</dbReference>
<dbReference type="GeneID" id="4981154"/>
<dbReference type="KEGG" id="ang:An06g01550"/>
<dbReference type="VEuPathDB" id="FungiDB:An06g01550"/>
<dbReference type="HOGENOM" id="CLU_000844_0_1_1"/>
<dbReference type="Proteomes" id="UP000006706">
    <property type="component" value="Chromosome 8ER"/>
</dbReference>
<dbReference type="GO" id="GO:0000148">
    <property type="term" value="C:1,3-beta-D-glucan synthase complex"/>
    <property type="evidence" value="ECO:0007669"/>
    <property type="project" value="InterPro"/>
</dbReference>
<dbReference type="GO" id="GO:0005739">
    <property type="term" value="C:mitochondrion"/>
    <property type="evidence" value="ECO:0007669"/>
    <property type="project" value="UniProtKB-SubCell"/>
</dbReference>
<dbReference type="GO" id="GO:0005886">
    <property type="term" value="C:plasma membrane"/>
    <property type="evidence" value="ECO:0007669"/>
    <property type="project" value="UniProtKB-SubCell"/>
</dbReference>
<dbReference type="GO" id="GO:0003843">
    <property type="term" value="F:1,3-beta-D-glucan synthase activity"/>
    <property type="evidence" value="ECO:0007669"/>
    <property type="project" value="UniProtKB-EC"/>
</dbReference>
<dbReference type="GO" id="GO:0006075">
    <property type="term" value="P:(1-&gt;3)-beta-D-glucan biosynthetic process"/>
    <property type="evidence" value="ECO:0007669"/>
    <property type="project" value="InterPro"/>
</dbReference>
<dbReference type="GO" id="GO:0071555">
    <property type="term" value="P:cell wall organization"/>
    <property type="evidence" value="ECO:0007669"/>
    <property type="project" value="UniProtKB-KW"/>
</dbReference>
<dbReference type="GO" id="GO:0051278">
    <property type="term" value="P:fungal-type cell wall polysaccharide biosynthetic process"/>
    <property type="evidence" value="ECO:0007669"/>
    <property type="project" value="TreeGrafter"/>
</dbReference>
<dbReference type="InterPro" id="IPR026899">
    <property type="entry name" value="FKS1-like_dom1"/>
</dbReference>
<dbReference type="InterPro" id="IPR056261">
    <property type="entry name" value="FKS1-like_dom2"/>
</dbReference>
<dbReference type="InterPro" id="IPR003440">
    <property type="entry name" value="Glyco_trans_48_dom"/>
</dbReference>
<dbReference type="PANTHER" id="PTHR12741:SF48">
    <property type="entry name" value="1,3-BETA-GLUCAN SYNTHASE COMPONENT FKS1-RELATED"/>
    <property type="match status" value="1"/>
</dbReference>
<dbReference type="PANTHER" id="PTHR12741">
    <property type="entry name" value="LYST-INTERACTING PROTEIN LIP5 DOPAMINE RESPONSIVE PROTEIN DRG-1"/>
    <property type="match status" value="1"/>
</dbReference>
<dbReference type="Pfam" id="PF14288">
    <property type="entry name" value="FKS1_dom1"/>
    <property type="match status" value="1"/>
</dbReference>
<dbReference type="Pfam" id="PF23605">
    <property type="entry name" value="FKS1_dom2"/>
    <property type="match status" value="1"/>
</dbReference>
<dbReference type="Pfam" id="PF02364">
    <property type="entry name" value="Glucan_synthase"/>
    <property type="match status" value="1"/>
</dbReference>
<dbReference type="SMART" id="SM01205">
    <property type="entry name" value="FKS1_dom1"/>
    <property type="match status" value="1"/>
</dbReference>
<feature type="chain" id="PRO_0000322581" description="1,3-beta-glucan synthase component FKS1">
    <location>
        <begin position="1"/>
        <end position="1897"/>
    </location>
</feature>
<feature type="transmembrane region" description="Helical" evidence="3">
    <location>
        <begin position="487"/>
        <end position="507"/>
    </location>
</feature>
<feature type="transmembrane region" description="Helical" evidence="3">
    <location>
        <begin position="525"/>
        <end position="545"/>
    </location>
</feature>
<feature type="transmembrane region" description="Helical" evidence="3">
    <location>
        <begin position="564"/>
        <end position="584"/>
    </location>
</feature>
<feature type="transmembrane region" description="Helical" evidence="3">
    <location>
        <begin position="591"/>
        <end position="611"/>
    </location>
</feature>
<feature type="transmembrane region" description="Helical" evidence="3">
    <location>
        <begin position="655"/>
        <end position="675"/>
    </location>
</feature>
<feature type="transmembrane region" description="Helical" evidence="3">
    <location>
        <begin position="707"/>
        <end position="727"/>
    </location>
</feature>
<feature type="transmembrane region" description="Helical" evidence="3">
    <location>
        <begin position="728"/>
        <end position="748"/>
    </location>
</feature>
<feature type="transmembrane region" description="Helical" evidence="3">
    <location>
        <begin position="1329"/>
        <end position="1349"/>
    </location>
</feature>
<feature type="transmembrane region" description="Helical" evidence="3">
    <location>
        <begin position="1386"/>
        <end position="1406"/>
    </location>
</feature>
<feature type="transmembrane region" description="Helical" evidence="3">
    <location>
        <begin position="1473"/>
        <end position="1493"/>
    </location>
</feature>
<feature type="transmembrane region" description="Helical" evidence="3">
    <location>
        <begin position="1497"/>
        <end position="1517"/>
    </location>
</feature>
<feature type="transmembrane region" description="Helical" evidence="3">
    <location>
        <begin position="1588"/>
        <end position="1608"/>
    </location>
</feature>
<feature type="transmembrane region" description="Helical" evidence="3">
    <location>
        <begin position="1630"/>
        <end position="1650"/>
    </location>
</feature>
<feature type="transmembrane region" description="Helical" evidence="3">
    <location>
        <begin position="1666"/>
        <end position="1686"/>
    </location>
</feature>
<feature type="transmembrane region" description="Helical" evidence="3">
    <location>
        <begin position="1701"/>
        <end position="1721"/>
    </location>
</feature>
<feature type="transmembrane region" description="Helical" evidence="3">
    <location>
        <begin position="1766"/>
        <end position="1786"/>
    </location>
</feature>
<feature type="transmembrane region" description="Helical" evidence="3">
    <location>
        <begin position="1826"/>
        <end position="1846"/>
    </location>
</feature>
<feature type="region of interest" description="Disordered" evidence="4">
    <location>
        <begin position="1"/>
        <end position="106"/>
    </location>
</feature>
<feature type="compositionally biased region" description="Basic and acidic residues" evidence="4">
    <location>
        <begin position="8"/>
        <end position="29"/>
    </location>
</feature>
<feature type="compositionally biased region" description="Low complexity" evidence="4">
    <location>
        <begin position="74"/>
        <end position="83"/>
    </location>
</feature>
<sequence length="1897" mass="216975">MSGYPAGHYEDGYGHQEHGGDAYYQDEHGQAYYDPNDYGDSYYDRGNYYNAEGGQAYGQEGGYYDAGHQDDYYGDQYYDQGNGAPRGRRRGDSEEDSETFSDFTMRSETARAADMDYYGRGDERYNSYADSQYAGRGYNGYRPPSSQVSYGANRSSGASTPVYGMDYGSALPGGPRSREPYPAWASDGQVPVSKEEIEDIFIDLVNKFGFQRDSMRNMYDHLMTQLDSRASRMTPNQALLSLHADYIGGDNANYRRWYFAAHLDLDDAVGFANMKLGKADRKTRKARKAAKAAAQQNPENVEENLEAMEGDNSLEAAVYRWKSRMNRMSPHDRVRQLALYMLCWGEANQVRYMPECICFIFKCADDYYSSPECQSRVEPVEEFTYLNEIITPLYQFCRDQGYEILDGKYVRRERDHEKIIGYDDMNQLFWYPEGIERISFEDKTRLVDVPPAERWTKLKDVDWKKAFFKTYRETRSWFHMITNFNRIWVIHLGAFWFFTAYNAPTLYTKNYQQQLDNKPAGSKYWSAVGFGGALVGLIQILATLCEWMYVPRRWAGAQHLSKRLMFLIAVFIVNLAPGVVVFGFNNVLSETICLIIGIVHFFIALATFFFFSVMPLGGLFGSYLKKHGRQYVASQTFTASYPRLNGNDMWMSYGLWICVFGAKLVESYFFLTLSLKDPMRILSPMRIHQCAGVTYIPNSLCHAQPQILLGLMMFMDLTLFFLDSYLWYVICNTIFSVARSFYLGVSIWSPWRNIFSRLPKRIYSKVLATTDMEIKYKPKVLISQVWNAIIISMYREHLLAIDHVQKLLYHQVPSEQEGKRTLRAPTFFVSQEDQSFKTEFFPAGSEAERRISFFAQSVATPMPEPLPVDNMPTFTVLIPHYGEKILLSLREIIREDEPYSRVTLLEYLKQLHPHEWDCFVKDTKILADETSQLNGEPEKNEKDAQKSKIDDLPFYCIGFKSAAPEYTLRTRIWSSLRSQTLYRTISGFMNYSRAIKLLYRVENPEVVQMFGGNSEKLERELERMARRKFKICVSMQRYAKFNKEERENTEFLLRAYPDLQIAYLDEEPPANEGEEPRLYSALIDGHCELLDNGMRKPKFRIQLSGNPILGDGKSDNQNHSIIFYRGEYIQVIDANQDNYLEECLKIRSVLAEFEELTTDNVSPYTPGIATEAETPVAILGAREYIFSENVGVLGDVAASKEQTFGTLFARTLAQIGGKLHYGHPDFLNGIFMTTRGGISKAQKGLHLNEDIYAGMTALCRGGRIKHCEYFQCGKGRDLGFGSILNFTTKIGTGMGEQMLSREYYYLGTQLPLDRFLSFYYAHPGFHLNNMFIMLSVQMFMIVLINLGALKHETITCRYNSNLPITDPLRPTYCADLTPIIAWVNRCVVSIFIVFFISFVPLAVQELTERGLWRMATRLAKHFGSFSFMFEVFVCQIYANAVHQNLSFGGARYIGTGRGFATARIPFGVLYSRFAGPSIYAGSRLLLMLLFATSTVWTPALIWFWVSLLALCISPFLFNPHQFAWHDFFIDYRDYIRWLSRGNSRSHASSWIAFCRLSRTRLTGYKRKLLGVPSEKGSGDVPRAKFTNIFFSEIIAPLVQVAVTLVPYLYINSRTGISNDNERASNAVVRIAIVAFGPIGVNAGVSGMFFGMACCMGPIFGMCCKKFGAVLAAIAHAIAVIILLVIFEVMFFLESWSWPRMVLGMISAAAIQRFIYKLIISLALTREFKHDQSNIAWWTGKWYNMGWHSLSQPGREFLCKITELGYFSADFVLGHILLFVMLPALCIPYVDKFHSVILFWLRPSRQIRPPIYSLKQSKLRKRRVVRFAILYFTMLVLFLILLIAPLVARDEGISVNLNIMSLMQPLDTDNNDTISSYTGNGLPVGYSAWTPSAASASA</sequence>
<protein>
    <recommendedName>
        <fullName>1,3-beta-glucan synthase component FKS1</fullName>
        <ecNumber evidence="1">2.4.1.34</ecNumber>
    </recommendedName>
    <alternativeName>
        <fullName>1,3-beta-D-glucan-UDP glucosyltransferase</fullName>
    </alternativeName>
</protein>
<accession>A2QLK4</accession>
<accession>Q5DRK6</accession>
<reference evidence="8" key="1">
    <citation type="journal article" date="2007" name="Nat. Biotechnol.">
        <title>Genome sequencing and analysis of the versatile cell factory Aspergillus niger CBS 513.88.</title>
        <authorList>
            <person name="Pel H.J."/>
            <person name="de Winde J.H."/>
            <person name="Archer D.B."/>
            <person name="Dyer P.S."/>
            <person name="Hofmann G."/>
            <person name="Schaap P.J."/>
            <person name="Turner G."/>
            <person name="de Vries R.P."/>
            <person name="Albang R."/>
            <person name="Albermann K."/>
            <person name="Andersen M.R."/>
            <person name="Bendtsen J.D."/>
            <person name="Benen J.A.E."/>
            <person name="van den Berg M."/>
            <person name="Breestraat S."/>
            <person name="Caddick M.X."/>
            <person name="Contreras R."/>
            <person name="Cornell M."/>
            <person name="Coutinho P.M."/>
            <person name="Danchin E.G.J."/>
            <person name="Debets A.J.M."/>
            <person name="Dekker P."/>
            <person name="van Dijck P.W.M."/>
            <person name="van Dijk A."/>
            <person name="Dijkhuizen L."/>
            <person name="Driessen A.J.M."/>
            <person name="d'Enfert C."/>
            <person name="Geysens S."/>
            <person name="Goosen C."/>
            <person name="Groot G.S.P."/>
            <person name="de Groot P.W.J."/>
            <person name="Guillemette T."/>
            <person name="Henrissat B."/>
            <person name="Herweijer M."/>
            <person name="van den Hombergh J.P.T.W."/>
            <person name="van den Hondel C.A.M.J.J."/>
            <person name="van der Heijden R.T.J.M."/>
            <person name="van der Kaaij R.M."/>
            <person name="Klis F.M."/>
            <person name="Kools H.J."/>
            <person name="Kubicek C.P."/>
            <person name="van Kuyk P.A."/>
            <person name="Lauber J."/>
            <person name="Lu X."/>
            <person name="van der Maarel M.J.E.C."/>
            <person name="Meulenberg R."/>
            <person name="Menke H."/>
            <person name="Mortimer M.A."/>
            <person name="Nielsen J."/>
            <person name="Oliver S.G."/>
            <person name="Olsthoorn M."/>
            <person name="Pal K."/>
            <person name="van Peij N.N.M.E."/>
            <person name="Ram A.F.J."/>
            <person name="Rinas U."/>
            <person name="Roubos J.A."/>
            <person name="Sagt C.M.J."/>
            <person name="Schmoll M."/>
            <person name="Sun J."/>
            <person name="Ussery D."/>
            <person name="Varga J."/>
            <person name="Vervecken W."/>
            <person name="van de Vondervoort P.J.J."/>
            <person name="Wedler H."/>
            <person name="Woesten H.A.B."/>
            <person name="Zeng A.-P."/>
            <person name="van Ooyen A.J.J."/>
            <person name="Visser J."/>
            <person name="Stam H."/>
        </authorList>
    </citation>
    <scope>NUCLEOTIDE SEQUENCE [LARGE SCALE GENOMIC DNA]</scope>
    <source>
        <strain>ATCC MYA-4892 / CBS 513.88 / FGSC A1513</strain>
    </source>
</reference>
<reference evidence="6 7" key="2">
    <citation type="journal article" date="2005" name="Fungal Genet. Biol.">
        <title>Expression of agsA, one of five 1,3-alpha-D-glucan synthase-encoding genes in Aspergillus niger, is induced in response to cell wall stress.</title>
        <authorList>
            <person name="Damveld R.A."/>
            <person name="van Kuyk P.A."/>
            <person name="Arentshorst M."/>
            <person name="Klis F.M."/>
            <person name="van den Hondel C.A.M.J.J."/>
            <person name="Ram A.F."/>
        </authorList>
    </citation>
    <scope>NUCLEOTIDE SEQUENCE [GENOMIC DNA] OF 1133-1254</scope>
    <source>
        <strain evidence="7">ATCC 9089 / N402</strain>
    </source>
</reference>
<gene>
    <name evidence="5" type="primary">fksA</name>
    <name evidence="1" type="synonym">fks1</name>
    <name type="ORF">An06g01550</name>
</gene>
<organism>
    <name type="scientific">Aspergillus niger (strain ATCC MYA-4892 / CBS 513.88 / FGSC A1513)</name>
    <dbReference type="NCBI Taxonomy" id="425011"/>
    <lineage>
        <taxon>Eukaryota</taxon>
        <taxon>Fungi</taxon>
        <taxon>Dikarya</taxon>
        <taxon>Ascomycota</taxon>
        <taxon>Pezizomycotina</taxon>
        <taxon>Eurotiomycetes</taxon>
        <taxon>Eurotiomycetidae</taxon>
        <taxon>Eurotiales</taxon>
        <taxon>Aspergillaceae</taxon>
        <taxon>Aspergillus</taxon>
        <taxon>Aspergillus subgen. Circumdati</taxon>
    </lineage>
</organism>
<comment type="function">
    <text evidence="1">Catalytic subunit of the 1,3-beta-glucan synthase. Synthesizes 1,3-beta-glucan, a major structural component of the fungal cell wall. Involved in cell wall synthesis, maintenance and remodeling (By similarity).</text>
</comment>
<comment type="catalytic activity">
    <reaction evidence="1">
        <text>[(1-&gt;3)-beta-D-glucosyl](n) + UDP-alpha-D-glucose = [(1-&gt;3)-beta-D-glucosyl](n+1) + UDP + H(+)</text>
        <dbReference type="Rhea" id="RHEA:21476"/>
        <dbReference type="Rhea" id="RHEA-COMP:11146"/>
        <dbReference type="Rhea" id="RHEA-COMP:14303"/>
        <dbReference type="ChEBI" id="CHEBI:15378"/>
        <dbReference type="ChEBI" id="CHEBI:37671"/>
        <dbReference type="ChEBI" id="CHEBI:58223"/>
        <dbReference type="ChEBI" id="CHEBI:58885"/>
        <dbReference type="EC" id="2.4.1.34"/>
    </reaction>
</comment>
<comment type="subunit">
    <text evidence="1">Component of the 1,3-beta-glucan synthase (GS) complex composed of a catalytic subunit fksA and a regulatory subunit.</text>
</comment>
<comment type="subcellular location">
    <subcellularLocation>
        <location evidence="2">Mitochondrion</location>
    </subcellularLocation>
    <subcellularLocation>
        <location evidence="1">Cell membrane</location>
        <topology evidence="3">Multi-pass membrane protein</topology>
    </subcellularLocation>
</comment>
<comment type="similarity">
    <text evidence="3">Belongs to the glycosyltransferase 48 family.</text>
</comment>